<comment type="function">
    <text evidence="1">Negatively regulates transcription of bacterial ribonucleotide reductase nrd genes and operons by binding to NrdR-boxes.</text>
</comment>
<comment type="cofactor">
    <cofactor evidence="1">
        <name>Zn(2+)</name>
        <dbReference type="ChEBI" id="CHEBI:29105"/>
    </cofactor>
    <text evidence="1">Binds 1 zinc ion.</text>
</comment>
<comment type="similarity">
    <text evidence="1">Belongs to the NrdR family.</text>
</comment>
<feature type="chain" id="PRO_0000182359" description="Transcriptional repressor NrdR">
    <location>
        <begin position="1"/>
        <end position="164"/>
    </location>
</feature>
<feature type="domain" description="ATP-cone" evidence="1">
    <location>
        <begin position="49"/>
        <end position="139"/>
    </location>
</feature>
<feature type="zinc finger region" evidence="1">
    <location>
        <begin position="3"/>
        <end position="34"/>
    </location>
</feature>
<organism>
    <name type="scientific">Streptococcus pyogenes serotype M1</name>
    <dbReference type="NCBI Taxonomy" id="301447"/>
    <lineage>
        <taxon>Bacteria</taxon>
        <taxon>Bacillati</taxon>
        <taxon>Bacillota</taxon>
        <taxon>Bacilli</taxon>
        <taxon>Lactobacillales</taxon>
        <taxon>Streptococcaceae</taxon>
        <taxon>Streptococcus</taxon>
    </lineage>
</organism>
<proteinExistence type="inferred from homology"/>
<name>NRDR_STRP1</name>
<sequence length="164" mass="19131">MRCPKCNYHKSSVVDSRQAEDGNTIRRRRECEQCHTRFTTFERVEELPLLVIKKDGTREQFSRDKILNGVVQSAQKRPVSSTDIENVISRIEQEVRTTYENEVSSTAIGNLVMDELAELDEITYVRFASVYKSFKDVDEIEELLQQITNRVRGKKKRLNNDETN</sequence>
<gene>
    <name evidence="1" type="primary">nrdR</name>
    <name type="ordered locus">SPy_0338</name>
    <name type="ordered locus">M5005_Spy0284</name>
</gene>
<reference key="1">
    <citation type="journal article" date="2001" name="Proc. Natl. Acad. Sci. U.S.A.">
        <title>Complete genome sequence of an M1 strain of Streptococcus pyogenes.</title>
        <authorList>
            <person name="Ferretti J.J."/>
            <person name="McShan W.M."/>
            <person name="Ajdic D.J."/>
            <person name="Savic D.J."/>
            <person name="Savic G."/>
            <person name="Lyon K."/>
            <person name="Primeaux C."/>
            <person name="Sezate S."/>
            <person name="Suvorov A.N."/>
            <person name="Kenton S."/>
            <person name="Lai H.S."/>
            <person name="Lin S.P."/>
            <person name="Qian Y."/>
            <person name="Jia H.G."/>
            <person name="Najar F.Z."/>
            <person name="Ren Q."/>
            <person name="Zhu H."/>
            <person name="Song L."/>
            <person name="White J."/>
            <person name="Yuan X."/>
            <person name="Clifton S.W."/>
            <person name="Roe B.A."/>
            <person name="McLaughlin R.E."/>
        </authorList>
    </citation>
    <scope>NUCLEOTIDE SEQUENCE [LARGE SCALE GENOMIC DNA]</scope>
    <source>
        <strain>ATCC 700294 / SF370 / Serotype M1</strain>
    </source>
</reference>
<reference key="2">
    <citation type="journal article" date="2005" name="J. Infect. Dis.">
        <title>Evolutionary origin and emergence of a highly successful clone of serotype M1 group A Streptococcus involved multiple horizontal gene transfer events.</title>
        <authorList>
            <person name="Sumby P."/>
            <person name="Porcella S.F."/>
            <person name="Madrigal A.G."/>
            <person name="Barbian K.D."/>
            <person name="Virtaneva K."/>
            <person name="Ricklefs S.M."/>
            <person name="Sturdevant D.E."/>
            <person name="Graham M.R."/>
            <person name="Vuopio-Varkila J."/>
            <person name="Hoe N.P."/>
            <person name="Musser J.M."/>
        </authorList>
    </citation>
    <scope>NUCLEOTIDE SEQUENCE [LARGE SCALE GENOMIC DNA]</scope>
    <source>
        <strain>ATCC BAA-947 / MGAS5005 / Serotype M1</strain>
    </source>
</reference>
<accession>P67320</accession>
<accession>Q490R5</accession>
<accession>Q9A1D3</accession>
<protein>
    <recommendedName>
        <fullName evidence="1">Transcriptional repressor NrdR</fullName>
    </recommendedName>
</protein>
<evidence type="ECO:0000255" key="1">
    <source>
        <dbReference type="HAMAP-Rule" id="MF_00440"/>
    </source>
</evidence>
<dbReference type="EMBL" id="AE004092">
    <property type="protein sequence ID" value="AAK33390.1"/>
    <property type="molecule type" value="Genomic_DNA"/>
</dbReference>
<dbReference type="EMBL" id="CP000017">
    <property type="protein sequence ID" value="AAZ50903.1"/>
    <property type="molecule type" value="Genomic_DNA"/>
</dbReference>
<dbReference type="RefSeq" id="NP_268669.1">
    <property type="nucleotide sequence ID" value="NC_002737.2"/>
</dbReference>
<dbReference type="SMR" id="P67320"/>
<dbReference type="PaxDb" id="1314-HKU360_00323"/>
<dbReference type="KEGG" id="spy:SPy_0338"/>
<dbReference type="KEGG" id="spz:M5005_Spy0284"/>
<dbReference type="PATRIC" id="fig|160490.10.peg.291"/>
<dbReference type="HOGENOM" id="CLU_108412_0_0_9"/>
<dbReference type="OMA" id="YRFTTYE"/>
<dbReference type="PHI-base" id="PHI:3464"/>
<dbReference type="Proteomes" id="UP000000750">
    <property type="component" value="Chromosome"/>
</dbReference>
<dbReference type="GO" id="GO:0005524">
    <property type="term" value="F:ATP binding"/>
    <property type="evidence" value="ECO:0007669"/>
    <property type="project" value="UniProtKB-KW"/>
</dbReference>
<dbReference type="GO" id="GO:0003677">
    <property type="term" value="F:DNA binding"/>
    <property type="evidence" value="ECO:0007669"/>
    <property type="project" value="UniProtKB-KW"/>
</dbReference>
<dbReference type="GO" id="GO:0008270">
    <property type="term" value="F:zinc ion binding"/>
    <property type="evidence" value="ECO:0007669"/>
    <property type="project" value="UniProtKB-UniRule"/>
</dbReference>
<dbReference type="GO" id="GO:0045892">
    <property type="term" value="P:negative regulation of DNA-templated transcription"/>
    <property type="evidence" value="ECO:0007669"/>
    <property type="project" value="UniProtKB-UniRule"/>
</dbReference>
<dbReference type="HAMAP" id="MF_00440">
    <property type="entry name" value="NrdR"/>
    <property type="match status" value="1"/>
</dbReference>
<dbReference type="InterPro" id="IPR005144">
    <property type="entry name" value="ATP-cone_dom"/>
</dbReference>
<dbReference type="InterPro" id="IPR055173">
    <property type="entry name" value="NrdR-like_N"/>
</dbReference>
<dbReference type="InterPro" id="IPR003796">
    <property type="entry name" value="RNR_NrdR-like"/>
</dbReference>
<dbReference type="NCBIfam" id="TIGR00244">
    <property type="entry name" value="transcriptional regulator NrdR"/>
    <property type="match status" value="1"/>
</dbReference>
<dbReference type="PANTHER" id="PTHR30455">
    <property type="entry name" value="TRANSCRIPTIONAL REPRESSOR NRDR"/>
    <property type="match status" value="1"/>
</dbReference>
<dbReference type="PANTHER" id="PTHR30455:SF2">
    <property type="entry name" value="TRANSCRIPTIONAL REPRESSOR NRDR"/>
    <property type="match status" value="1"/>
</dbReference>
<dbReference type="Pfam" id="PF03477">
    <property type="entry name" value="ATP-cone"/>
    <property type="match status" value="1"/>
</dbReference>
<dbReference type="Pfam" id="PF22811">
    <property type="entry name" value="Zn_ribbon_NrdR"/>
    <property type="match status" value="1"/>
</dbReference>
<dbReference type="PROSITE" id="PS51161">
    <property type="entry name" value="ATP_CONE"/>
    <property type="match status" value="1"/>
</dbReference>
<keyword id="KW-0067">ATP-binding</keyword>
<keyword id="KW-0238">DNA-binding</keyword>
<keyword id="KW-0479">Metal-binding</keyword>
<keyword id="KW-0547">Nucleotide-binding</keyword>
<keyword id="KW-1185">Reference proteome</keyword>
<keyword id="KW-0678">Repressor</keyword>
<keyword id="KW-0804">Transcription</keyword>
<keyword id="KW-0805">Transcription regulation</keyword>
<keyword id="KW-0862">Zinc</keyword>
<keyword id="KW-0863">Zinc-finger</keyword>